<protein>
    <recommendedName>
        <fullName evidence="1 4">NADPH--cytochrome P450 reductase 1</fullName>
        <shortName evidence="1">CPR</shortName>
        <shortName evidence="4">OsCPR1</shortName>
        <shortName evidence="1">P450R</shortName>
        <ecNumber evidence="1 3">1.6.2.4</ecNumber>
    </recommendedName>
</protein>
<evidence type="ECO:0000255" key="1">
    <source>
        <dbReference type="HAMAP-Rule" id="MF_03212"/>
    </source>
</evidence>
<evidence type="ECO:0000269" key="2">
    <source>
    </source>
</evidence>
<evidence type="ECO:0000269" key="3">
    <source>
    </source>
</evidence>
<evidence type="ECO:0000303" key="4">
    <source>
    </source>
</evidence>
<evidence type="ECO:0000312" key="5">
    <source>
        <dbReference type="EMBL" id="BAS91389.1"/>
    </source>
</evidence>
<evidence type="ECO:0000312" key="6">
    <source>
        <dbReference type="EMBL" id="CAE01547.2"/>
    </source>
</evidence>
<evidence type="ECO:0000312" key="7">
    <source>
        <dbReference type="EMBL" id="CAE03554.2"/>
    </source>
</evidence>
<feature type="chain" id="PRO_0000451428" description="NADPH--cytochrome P450 reductase 1">
    <location>
        <begin position="1"/>
        <end position="695"/>
    </location>
</feature>
<feature type="topological domain" description="Lumenal" evidence="1">
    <location>
        <begin position="1"/>
        <end position="29"/>
    </location>
</feature>
<feature type="transmembrane region" description="Helical" evidence="1">
    <location>
        <begin position="30"/>
        <end position="50"/>
    </location>
</feature>
<feature type="topological domain" description="Cytoplasmic" evidence="1">
    <location>
        <begin position="51"/>
        <end position="695"/>
    </location>
</feature>
<feature type="domain" description="Flavodoxin-like" evidence="1">
    <location>
        <begin position="85"/>
        <end position="235"/>
    </location>
</feature>
<feature type="domain" description="FAD-binding FR-type" evidence="1">
    <location>
        <begin position="291"/>
        <end position="540"/>
    </location>
</feature>
<feature type="binding site" evidence="1">
    <location>
        <begin position="91"/>
        <end position="96"/>
    </location>
    <ligand>
        <name>FMN</name>
        <dbReference type="ChEBI" id="CHEBI:58210"/>
    </ligand>
</feature>
<feature type="binding site" evidence="1">
    <location>
        <begin position="146"/>
        <end position="149"/>
    </location>
    <ligand>
        <name>FMN</name>
        <dbReference type="ChEBI" id="CHEBI:58210"/>
    </ligand>
</feature>
<feature type="binding site" evidence="1">
    <location>
        <begin position="184"/>
        <end position="193"/>
    </location>
    <ligand>
        <name>FMN</name>
        <dbReference type="ChEBI" id="CHEBI:58210"/>
    </ligand>
</feature>
<feature type="binding site" evidence="1">
    <location>
        <position position="219"/>
    </location>
    <ligand>
        <name>FMN</name>
        <dbReference type="ChEBI" id="CHEBI:58210"/>
    </ligand>
</feature>
<feature type="binding site" evidence="1">
    <location>
        <position position="311"/>
    </location>
    <ligand>
        <name>NADP(+)</name>
        <dbReference type="ChEBI" id="CHEBI:58349"/>
    </ligand>
</feature>
<feature type="binding site" evidence="1">
    <location>
        <begin position="473"/>
        <end position="476"/>
    </location>
    <ligand>
        <name>FAD</name>
        <dbReference type="ChEBI" id="CHEBI:57692"/>
    </ligand>
</feature>
<feature type="binding site" evidence="1">
    <location>
        <begin position="491"/>
        <end position="493"/>
    </location>
    <ligand>
        <name>FAD</name>
        <dbReference type="ChEBI" id="CHEBI:57692"/>
    </ligand>
</feature>
<feature type="binding site" evidence="1">
    <location>
        <begin position="507"/>
        <end position="510"/>
    </location>
    <ligand>
        <name>FAD</name>
        <dbReference type="ChEBI" id="CHEBI:57692"/>
    </ligand>
</feature>
<feature type="binding site" evidence="1">
    <location>
        <position position="554"/>
    </location>
    <ligand>
        <name>NADP(+)</name>
        <dbReference type="ChEBI" id="CHEBI:58349"/>
    </ligand>
</feature>
<feature type="binding site" evidence="1">
    <location>
        <begin position="615"/>
        <end position="616"/>
    </location>
    <ligand>
        <name>NADP(+)</name>
        <dbReference type="ChEBI" id="CHEBI:58349"/>
    </ligand>
</feature>
<feature type="binding site" evidence="1">
    <location>
        <begin position="621"/>
        <end position="625"/>
    </location>
    <ligand>
        <name>NADP(+)</name>
        <dbReference type="ChEBI" id="CHEBI:58349"/>
    </ligand>
</feature>
<feature type="binding site" evidence="1">
    <location>
        <position position="657"/>
    </location>
    <ligand>
        <name>NADP(+)</name>
        <dbReference type="ChEBI" id="CHEBI:58349"/>
    </ligand>
</feature>
<feature type="binding site" evidence="1">
    <location>
        <position position="695"/>
    </location>
    <ligand>
        <name>FAD</name>
        <dbReference type="ChEBI" id="CHEBI:57692"/>
    </ligand>
</feature>
<gene>
    <name evidence="4" type="primary">CPR1</name>
    <name evidence="5" type="ordered locus">Os04g0653400</name>
    <name evidence="7" type="ORF">OSJNBa0060D06.20</name>
    <name evidence="6" type="ORF">OSJNBb0022F16.2</name>
</gene>
<sequence length="695" mass="76172">MALALEAARSWAASVLPPELAAAAGGDPLAALAATAAALVAGVVILAVWFRSGGGAPPKAAAPPPRPPPVKIEADADADDGRKRVTVFFGTQTGTAEGFAKAMAEEARARYEKAVFKVVDLDDYAAEDEEYEEKLRKETIVLLFLATYGDGEPTDNAARFYKWFTEGKEKEVWLKDLKYAVFGLGNRQYEHFNKVAKVVDELLEEQGGKRLVPVGLGDDDQCIEDDFTAWKEQVWPELDQLLRDEDDTTGASTPYTAAIPEYRIVFIDKSDVSFQDKSWSLANGSGVIDIHHPVRSNVAVRKELHKPASDRSCIHLEFDISGTGLVYETGDHVGVYSENAIETVEQAEKLLDLSPDTFFSVHADAEDGSPRKGGGSLAPPFPSPCTLRTALLRYADLLNSPKKAALVALAAHASDLAEAERLRFLASPAGKDEYSQWVVASQRSLLEVMAAFPSAKPPLGVFFAAVAPRLQPRYYSISSSPKMAPSRIHVTCALVYGPTPTGRIHQGVCSTWMKNAIPSEYSEECSWAPIYVRQSNFKLPADPTTPIIMIGPGTGLAPFRGFLQERLALKQSGVELGNSVLFFGCRNRNMDYIYEDELQNFIQEGALSELIVAFSREGPAKEYVQHKMTEKATEIWNIVSQGGYIYVCGDAKGMARDVHRALHTIVQEQGSLDSSKTESYVKSLQMDGRYLRDVW</sequence>
<reference key="1">
    <citation type="journal article" date="2002" name="Nature">
        <title>Sequence and analysis of rice chromosome 4.</title>
        <authorList>
            <person name="Feng Q."/>
            <person name="Zhang Y."/>
            <person name="Hao P."/>
            <person name="Wang S."/>
            <person name="Fu G."/>
            <person name="Huang Y."/>
            <person name="Li Y."/>
            <person name="Zhu J."/>
            <person name="Liu Y."/>
            <person name="Hu X."/>
            <person name="Jia P."/>
            <person name="Zhang Y."/>
            <person name="Zhao Q."/>
            <person name="Ying K."/>
            <person name="Yu S."/>
            <person name="Tang Y."/>
            <person name="Weng Q."/>
            <person name="Zhang L."/>
            <person name="Lu Y."/>
            <person name="Mu J."/>
            <person name="Lu Y."/>
            <person name="Zhang L.S."/>
            <person name="Yu Z."/>
            <person name="Fan D."/>
            <person name="Liu X."/>
            <person name="Lu T."/>
            <person name="Li C."/>
            <person name="Wu Y."/>
            <person name="Sun T."/>
            <person name="Lei H."/>
            <person name="Li T."/>
            <person name="Hu H."/>
            <person name="Guan J."/>
            <person name="Wu M."/>
            <person name="Zhang R."/>
            <person name="Zhou B."/>
            <person name="Chen Z."/>
            <person name="Chen L."/>
            <person name="Jin Z."/>
            <person name="Wang R."/>
            <person name="Yin H."/>
            <person name="Cai Z."/>
            <person name="Ren S."/>
            <person name="Lv G."/>
            <person name="Gu W."/>
            <person name="Zhu G."/>
            <person name="Tu Y."/>
            <person name="Jia J."/>
            <person name="Zhang Y."/>
            <person name="Chen J."/>
            <person name="Kang H."/>
            <person name="Chen X."/>
            <person name="Shao C."/>
            <person name="Sun Y."/>
            <person name="Hu Q."/>
            <person name="Zhang X."/>
            <person name="Zhang W."/>
            <person name="Wang L."/>
            <person name="Ding C."/>
            <person name="Sheng H."/>
            <person name="Gu J."/>
            <person name="Chen S."/>
            <person name="Ni L."/>
            <person name="Zhu F."/>
            <person name="Chen W."/>
            <person name="Lan L."/>
            <person name="Lai Y."/>
            <person name="Cheng Z."/>
            <person name="Gu M."/>
            <person name="Jiang J."/>
            <person name="Li J."/>
            <person name="Hong G."/>
            <person name="Xue Y."/>
            <person name="Han B."/>
        </authorList>
    </citation>
    <scope>NUCLEOTIDE SEQUENCE [LARGE SCALE GENOMIC DNA]</scope>
    <source>
        <strain>cv. Nipponbare</strain>
    </source>
</reference>
<reference key="2">
    <citation type="journal article" date="2005" name="Nature">
        <title>The map-based sequence of the rice genome.</title>
        <authorList>
            <consortium name="International rice genome sequencing project (IRGSP)"/>
        </authorList>
    </citation>
    <scope>NUCLEOTIDE SEQUENCE [LARGE SCALE GENOMIC DNA]</scope>
    <source>
        <strain>cv. Nipponbare</strain>
    </source>
</reference>
<reference key="3">
    <citation type="journal article" date="2008" name="Nucleic Acids Res.">
        <title>The rice annotation project database (RAP-DB): 2008 update.</title>
        <authorList>
            <consortium name="The rice annotation project (RAP)"/>
        </authorList>
    </citation>
    <scope>GENOME REANNOTATION</scope>
    <source>
        <strain>cv. Nipponbare</strain>
    </source>
</reference>
<reference key="4">
    <citation type="journal article" date="2013" name="Rice">
        <title>Improvement of the Oryza sativa Nipponbare reference genome using next generation sequence and optical map data.</title>
        <authorList>
            <person name="Kawahara Y."/>
            <person name="de la Bastide M."/>
            <person name="Hamilton J.P."/>
            <person name="Kanamori H."/>
            <person name="McCombie W.R."/>
            <person name="Ouyang S."/>
            <person name="Schwartz D.C."/>
            <person name="Tanaka T."/>
            <person name="Wu J."/>
            <person name="Zhou S."/>
            <person name="Childs K.L."/>
            <person name="Davidson R.M."/>
            <person name="Lin H."/>
            <person name="Quesada-Ocampo L."/>
            <person name="Vaillancourt B."/>
            <person name="Sakai H."/>
            <person name="Lee S.S."/>
            <person name="Kim J."/>
            <person name="Numa H."/>
            <person name="Itoh T."/>
            <person name="Buell C.R."/>
            <person name="Matsumoto T."/>
        </authorList>
    </citation>
    <scope>GENOME REANNOTATION</scope>
    <source>
        <strain>cv. Nipponbare</strain>
    </source>
</reference>
<reference key="5">
    <citation type="submission" date="2006-10" db="EMBL/GenBank/DDBJ databases">
        <title>Oryza sativa full length cDNA.</title>
        <authorList>
            <consortium name="The rice full-length cDNA consortium"/>
        </authorList>
    </citation>
    <scope>NUCLEOTIDE SEQUENCE [LARGE SCALE MRNA]</scope>
    <source>
        <strain>cv. Nipponbare</strain>
    </source>
</reference>
<reference key="6">
    <citation type="journal article" date="2001" name="Mol. Plant Microbe Interact.">
        <title>Identification of defense-related rice genes by suppression subtractive hybridization and differential screening.</title>
        <authorList>
            <person name="Xiong L."/>
            <person name="Lee M.W."/>
            <person name="Qi M."/>
            <person name="Yang Y."/>
        </authorList>
    </citation>
    <scope>INDUCTION BY JASMONATE</scope>
</reference>
<reference key="7">
    <citation type="journal article" date="2013" name="Bioprocess Biosyst. Eng.">
        <title>Rice P450 reductases differentially affect P450-mediated metabolism in bacterial expression systems.</title>
        <authorList>
            <person name="Park S."/>
            <person name="Kim Y.S."/>
            <person name="Rupasinghe S.G."/>
            <person name="Schuler M.A."/>
            <person name="Back K."/>
        </authorList>
    </citation>
    <scope>FUNCTION</scope>
    <scope>CATALYTIC ACTIVITY</scope>
    <scope>BIOPHYSICOCHEMICAL PROPERTIES</scope>
    <scope>SUBCELLULAR LOCATION</scope>
    <scope>INDUCTION</scope>
</reference>
<proteinExistence type="evidence at protein level"/>
<comment type="function">
    <text evidence="1 3">This enzyme is required for electron transfer from NADP to cytochrome P450 in microsomes (By similarity) (PubMed:23053415). It can also provide electron transfer to heme oxygenase and cytochrome B5 (By similarity). Can reduce cytochrome c in vitro (PubMed:23053415).</text>
</comment>
<comment type="catalytic activity">
    <reaction evidence="1 3">
        <text>2 oxidized [cytochrome P450] + NADPH = 2 reduced [cytochrome P450] + NADP(+) + H(+)</text>
        <dbReference type="Rhea" id="RHEA:24040"/>
        <dbReference type="Rhea" id="RHEA-COMP:14627"/>
        <dbReference type="Rhea" id="RHEA-COMP:14628"/>
        <dbReference type="ChEBI" id="CHEBI:15378"/>
        <dbReference type="ChEBI" id="CHEBI:55376"/>
        <dbReference type="ChEBI" id="CHEBI:57783"/>
        <dbReference type="ChEBI" id="CHEBI:58349"/>
        <dbReference type="ChEBI" id="CHEBI:60344"/>
        <dbReference type="EC" id="1.6.2.4"/>
    </reaction>
    <physiologicalReaction direction="left-to-right" evidence="3">
        <dbReference type="Rhea" id="RHEA:24041"/>
    </physiologicalReaction>
</comment>
<comment type="cofactor">
    <cofactor evidence="1">
        <name>FAD</name>
        <dbReference type="ChEBI" id="CHEBI:57692"/>
    </cofactor>
    <text evidence="1">Binds 1 FAD per monomer.</text>
</comment>
<comment type="cofactor">
    <cofactor evidence="1">
        <name>FMN</name>
        <dbReference type="ChEBI" id="CHEBI:58210"/>
    </cofactor>
    <text evidence="1">Binds 1 FMN per monomer.</text>
</comment>
<comment type="biophysicochemical properties">
    <kinetics>
        <KM evidence="3">1 uM for cytochrome c</KM>
        <Vmax evidence="3">15.07 umol/min/mg enzyme with cytochrome c as substrate</Vmax>
    </kinetics>
</comment>
<comment type="subcellular location">
    <subcellularLocation>
        <location evidence="1 3">Endoplasmic reticulum membrane</location>
        <topology evidence="1">Single-pass membrane protein</topology>
        <orientation evidence="1">Cytoplasmic side</orientation>
    </subcellularLocation>
</comment>
<comment type="induction">
    <text evidence="2 3">Induced by drought stress, acifluorfen and cadmium (PubMed:23053415). Induced by jasmonate (JA) (PubMed:11332734).</text>
</comment>
<comment type="similarity">
    <text evidence="1">Belongs to the NADPH--cytochrome P450 reductase family.</text>
</comment>
<comment type="similarity">
    <text evidence="1">In the C-terminal section; belongs to the flavoprotein pyridine nucleotide cytochrome reductase family.</text>
</comment>
<comment type="similarity">
    <text evidence="1">In the N-terminal section; belongs to the flavodoxin family.</text>
</comment>
<organism>
    <name type="scientific">Oryza sativa subsp. japonica</name>
    <name type="common">Rice</name>
    <dbReference type="NCBI Taxonomy" id="39947"/>
    <lineage>
        <taxon>Eukaryota</taxon>
        <taxon>Viridiplantae</taxon>
        <taxon>Streptophyta</taxon>
        <taxon>Embryophyta</taxon>
        <taxon>Tracheophyta</taxon>
        <taxon>Spermatophyta</taxon>
        <taxon>Magnoliopsida</taxon>
        <taxon>Liliopsida</taxon>
        <taxon>Poales</taxon>
        <taxon>Poaceae</taxon>
        <taxon>BOP clade</taxon>
        <taxon>Oryzoideae</taxon>
        <taxon>Oryzeae</taxon>
        <taxon>Oryzinae</taxon>
        <taxon>Oryza</taxon>
        <taxon>Oryza sativa</taxon>
    </lineage>
</organism>
<name>NCPR1_ORYSJ</name>
<accession>Q7X7K8</accession>
<accession>A0A0P0WFQ6</accession>
<dbReference type="EC" id="1.6.2.4" evidence="1 3"/>
<dbReference type="EMBL" id="AL606446">
    <property type="protein sequence ID" value="CAE01547.2"/>
    <property type="molecule type" value="Genomic_DNA"/>
</dbReference>
<dbReference type="EMBL" id="AL606690">
    <property type="protein sequence ID" value="CAE03554.2"/>
    <property type="molecule type" value="Genomic_DNA"/>
</dbReference>
<dbReference type="EMBL" id="AP014960">
    <property type="protein sequence ID" value="BAS91389.1"/>
    <property type="molecule type" value="Genomic_DNA"/>
</dbReference>
<dbReference type="EMBL" id="AK243608">
    <property type="status" value="NOT_ANNOTATED_CDS"/>
    <property type="molecule type" value="mRNA"/>
</dbReference>
<dbReference type="SMR" id="Q7X7K8"/>
<dbReference type="FunCoup" id="Q7X7K8">
    <property type="interactions" value="3207"/>
</dbReference>
<dbReference type="STRING" id="39947.Q7X7K8"/>
<dbReference type="PaxDb" id="39947-Q7X7K8"/>
<dbReference type="EnsemblPlants" id="Os04t0653400-01">
    <property type="protein sequence ID" value="Os04t0653400-01"/>
    <property type="gene ID" value="Os04g0653400"/>
</dbReference>
<dbReference type="Gramene" id="Os04t0653400-01">
    <property type="protein sequence ID" value="Os04t0653400-01"/>
    <property type="gene ID" value="Os04g0653400"/>
</dbReference>
<dbReference type="KEGG" id="osa:4337244"/>
<dbReference type="eggNOG" id="KOG1158">
    <property type="taxonomic scope" value="Eukaryota"/>
</dbReference>
<dbReference type="HOGENOM" id="CLU_001570_17_3_1"/>
<dbReference type="InParanoid" id="Q7X7K8"/>
<dbReference type="OMA" id="HRMYSIA"/>
<dbReference type="OrthoDB" id="1856718at2759"/>
<dbReference type="Proteomes" id="UP000000763">
    <property type="component" value="Chromosome 4"/>
</dbReference>
<dbReference type="Proteomes" id="UP000059680">
    <property type="component" value="Chromosome 4"/>
</dbReference>
<dbReference type="GO" id="GO:0005829">
    <property type="term" value="C:cytosol"/>
    <property type="evidence" value="ECO:0000318"/>
    <property type="project" value="GO_Central"/>
</dbReference>
<dbReference type="GO" id="GO:0005789">
    <property type="term" value="C:endoplasmic reticulum membrane"/>
    <property type="evidence" value="ECO:0000314"/>
    <property type="project" value="UniProtKB"/>
</dbReference>
<dbReference type="GO" id="GO:0050660">
    <property type="term" value="F:flavin adenine dinucleotide binding"/>
    <property type="evidence" value="ECO:0000318"/>
    <property type="project" value="GO_Central"/>
</dbReference>
<dbReference type="GO" id="GO:0010181">
    <property type="term" value="F:FMN binding"/>
    <property type="evidence" value="ECO:0000318"/>
    <property type="project" value="GO_Central"/>
</dbReference>
<dbReference type="GO" id="GO:0050661">
    <property type="term" value="F:NADP binding"/>
    <property type="evidence" value="ECO:0007669"/>
    <property type="project" value="UniProtKB-UniRule"/>
</dbReference>
<dbReference type="GO" id="GO:0003958">
    <property type="term" value="F:NADPH-hemoprotein reductase activity"/>
    <property type="evidence" value="ECO:0000314"/>
    <property type="project" value="UniProtKB"/>
</dbReference>
<dbReference type="CDD" id="cd06204">
    <property type="entry name" value="CYPOR"/>
    <property type="match status" value="1"/>
</dbReference>
<dbReference type="FunFam" id="1.20.990.10:FF:000003">
    <property type="entry name" value="NADPH--cytochrome P450 reductase"/>
    <property type="match status" value="1"/>
</dbReference>
<dbReference type="FunFam" id="3.40.50.360:FF:000023">
    <property type="entry name" value="NADPH--cytochrome P450 reductase"/>
    <property type="match status" value="1"/>
</dbReference>
<dbReference type="FunFam" id="3.40.50.80:FF:000001">
    <property type="entry name" value="NADPH--cytochrome P450 reductase 1"/>
    <property type="match status" value="1"/>
</dbReference>
<dbReference type="Gene3D" id="3.40.50.360">
    <property type="match status" value="1"/>
</dbReference>
<dbReference type="Gene3D" id="1.20.990.10">
    <property type="entry name" value="NADPH-cytochrome p450 Reductase, Chain A, domain 3"/>
    <property type="match status" value="1"/>
</dbReference>
<dbReference type="Gene3D" id="3.40.50.80">
    <property type="entry name" value="Nucleotide-binding domain of ferredoxin-NADP reductase (FNR) module"/>
    <property type="match status" value="1"/>
</dbReference>
<dbReference type="Gene3D" id="2.40.30.10">
    <property type="entry name" value="Translation factors"/>
    <property type="match status" value="1"/>
</dbReference>
<dbReference type="HAMAP" id="MF_03212">
    <property type="entry name" value="NCPR"/>
    <property type="match status" value="1"/>
</dbReference>
<dbReference type="InterPro" id="IPR003097">
    <property type="entry name" value="CysJ-like_FAD-binding"/>
</dbReference>
<dbReference type="InterPro" id="IPR017927">
    <property type="entry name" value="FAD-bd_FR_type"/>
</dbReference>
<dbReference type="InterPro" id="IPR001094">
    <property type="entry name" value="Flavdoxin-like"/>
</dbReference>
<dbReference type="InterPro" id="IPR008254">
    <property type="entry name" value="Flavodoxin/NO_synth"/>
</dbReference>
<dbReference type="InterPro" id="IPR001709">
    <property type="entry name" value="Flavoprot_Pyr_Nucl_cyt_Rdtase"/>
</dbReference>
<dbReference type="InterPro" id="IPR029039">
    <property type="entry name" value="Flavoprotein-like_sf"/>
</dbReference>
<dbReference type="InterPro" id="IPR039261">
    <property type="entry name" value="FNR_nucleotide-bd"/>
</dbReference>
<dbReference type="InterPro" id="IPR023173">
    <property type="entry name" value="NADPH_Cyt_P450_Rdtase_alpha"/>
</dbReference>
<dbReference type="InterPro" id="IPR001433">
    <property type="entry name" value="OxRdtase_FAD/NAD-bd"/>
</dbReference>
<dbReference type="InterPro" id="IPR023208">
    <property type="entry name" value="P450R"/>
</dbReference>
<dbReference type="InterPro" id="IPR017938">
    <property type="entry name" value="Riboflavin_synthase-like_b-brl"/>
</dbReference>
<dbReference type="PANTHER" id="PTHR19384:SF107">
    <property type="entry name" value="NADPH--CYTOCHROME P450 REDUCTASE 1"/>
    <property type="match status" value="1"/>
</dbReference>
<dbReference type="PANTHER" id="PTHR19384">
    <property type="entry name" value="NITRIC OXIDE SYNTHASE-RELATED"/>
    <property type="match status" value="1"/>
</dbReference>
<dbReference type="Pfam" id="PF00667">
    <property type="entry name" value="FAD_binding_1"/>
    <property type="match status" value="1"/>
</dbReference>
<dbReference type="Pfam" id="PF00258">
    <property type="entry name" value="Flavodoxin_1"/>
    <property type="match status" value="1"/>
</dbReference>
<dbReference type="Pfam" id="PF00175">
    <property type="entry name" value="NAD_binding_1"/>
    <property type="match status" value="1"/>
</dbReference>
<dbReference type="PIRSF" id="PIRSF000208">
    <property type="entry name" value="P450R"/>
    <property type="match status" value="1"/>
</dbReference>
<dbReference type="PRINTS" id="PR00369">
    <property type="entry name" value="FLAVODOXIN"/>
</dbReference>
<dbReference type="PRINTS" id="PR00371">
    <property type="entry name" value="FPNCR"/>
</dbReference>
<dbReference type="SUPFAM" id="SSF52343">
    <property type="entry name" value="Ferredoxin reductase-like, C-terminal NADP-linked domain"/>
    <property type="match status" value="1"/>
</dbReference>
<dbReference type="SUPFAM" id="SSF52218">
    <property type="entry name" value="Flavoproteins"/>
    <property type="match status" value="1"/>
</dbReference>
<dbReference type="SUPFAM" id="SSF63380">
    <property type="entry name" value="Riboflavin synthase domain-like"/>
    <property type="match status" value="1"/>
</dbReference>
<dbReference type="PROSITE" id="PS51384">
    <property type="entry name" value="FAD_FR"/>
    <property type="match status" value="1"/>
</dbReference>
<dbReference type="PROSITE" id="PS50902">
    <property type="entry name" value="FLAVODOXIN_LIKE"/>
    <property type="match status" value="1"/>
</dbReference>
<keyword id="KW-0256">Endoplasmic reticulum</keyword>
<keyword id="KW-0274">FAD</keyword>
<keyword id="KW-0285">Flavoprotein</keyword>
<keyword id="KW-0288">FMN</keyword>
<keyword id="KW-0472">Membrane</keyword>
<keyword id="KW-0521">NADP</keyword>
<keyword id="KW-0560">Oxidoreductase</keyword>
<keyword id="KW-1185">Reference proteome</keyword>
<keyword id="KW-0812">Transmembrane</keyword>
<keyword id="KW-1133">Transmembrane helix</keyword>